<name>FABA_SHIDS</name>
<sequence length="172" mass="18969">MVDKRESYTKEDLLASGRGELFGAKGPQLPAPNMLMMDRVVKMTETGGNFDKGYVEAELDINPDLWFFGCHFIGDPVMPGCLGLDAMWQLVGFYLGWLGGEGKGRALGVGEVKFTGQVLPTAKKVTYRIHFKRIVNRRLIMGLADGEVLVDGRLIYTASDLKVGLFQDTSAF</sequence>
<reference key="1">
    <citation type="journal article" date="2005" name="Nucleic Acids Res.">
        <title>Genome dynamics and diversity of Shigella species, the etiologic agents of bacillary dysentery.</title>
        <authorList>
            <person name="Yang F."/>
            <person name="Yang J."/>
            <person name="Zhang X."/>
            <person name="Chen L."/>
            <person name="Jiang Y."/>
            <person name="Yan Y."/>
            <person name="Tang X."/>
            <person name="Wang J."/>
            <person name="Xiong Z."/>
            <person name="Dong J."/>
            <person name="Xue Y."/>
            <person name="Zhu Y."/>
            <person name="Xu X."/>
            <person name="Sun L."/>
            <person name="Chen S."/>
            <person name="Nie H."/>
            <person name="Peng J."/>
            <person name="Xu J."/>
            <person name="Wang Y."/>
            <person name="Yuan Z."/>
            <person name="Wen Y."/>
            <person name="Yao Z."/>
            <person name="Shen Y."/>
            <person name="Qiang B."/>
            <person name="Hou Y."/>
            <person name="Yu J."/>
            <person name="Jin Q."/>
        </authorList>
    </citation>
    <scope>NUCLEOTIDE SEQUENCE [LARGE SCALE GENOMIC DNA]</scope>
    <source>
        <strain>Sd197</strain>
    </source>
</reference>
<evidence type="ECO:0000255" key="1">
    <source>
        <dbReference type="HAMAP-Rule" id="MF_00405"/>
    </source>
</evidence>
<gene>
    <name evidence="1" type="primary">fabA</name>
    <name type="ordered locus">SDY_0927</name>
</gene>
<organism>
    <name type="scientific">Shigella dysenteriae serotype 1 (strain Sd197)</name>
    <dbReference type="NCBI Taxonomy" id="300267"/>
    <lineage>
        <taxon>Bacteria</taxon>
        <taxon>Pseudomonadati</taxon>
        <taxon>Pseudomonadota</taxon>
        <taxon>Gammaproteobacteria</taxon>
        <taxon>Enterobacterales</taxon>
        <taxon>Enterobacteriaceae</taxon>
        <taxon>Shigella</taxon>
    </lineage>
</organism>
<proteinExistence type="inferred from homology"/>
<feature type="chain" id="PRO_0000267755" description="3-hydroxydecanoyl-[acyl-carrier-protein] dehydratase">
    <location>
        <begin position="1"/>
        <end position="172"/>
    </location>
</feature>
<feature type="active site" evidence="1">
    <location>
        <position position="71"/>
    </location>
</feature>
<comment type="function">
    <text evidence="1">Necessary for the introduction of cis unsaturation into fatty acids. Catalyzes the dehydration of (3R)-3-hydroxydecanoyl-ACP to E-(2)-decenoyl-ACP and then its isomerization to Z-(3)-decenoyl-ACP. Can catalyze the dehydratase reaction for beta-hydroxyacyl-ACPs with saturated chain lengths up to 16:0, being most active on intermediate chain length.</text>
</comment>
<comment type="catalytic activity">
    <reaction evidence="1">
        <text>a (3R)-hydroxyacyl-[ACP] = a (2E)-enoyl-[ACP] + H2O</text>
        <dbReference type="Rhea" id="RHEA:13097"/>
        <dbReference type="Rhea" id="RHEA-COMP:9925"/>
        <dbReference type="Rhea" id="RHEA-COMP:9945"/>
        <dbReference type="ChEBI" id="CHEBI:15377"/>
        <dbReference type="ChEBI" id="CHEBI:78784"/>
        <dbReference type="ChEBI" id="CHEBI:78827"/>
        <dbReference type="EC" id="4.2.1.59"/>
    </reaction>
</comment>
<comment type="catalytic activity">
    <reaction evidence="1">
        <text>(3R)-hydroxydecanoyl-[ACP] = (2E)-decenoyl-[ACP] + H2O</text>
        <dbReference type="Rhea" id="RHEA:41860"/>
        <dbReference type="Rhea" id="RHEA-COMP:9638"/>
        <dbReference type="Rhea" id="RHEA-COMP:9639"/>
        <dbReference type="ChEBI" id="CHEBI:15377"/>
        <dbReference type="ChEBI" id="CHEBI:78466"/>
        <dbReference type="ChEBI" id="CHEBI:78467"/>
    </reaction>
</comment>
<comment type="catalytic activity">
    <reaction evidence="1">
        <text>(2E)-decenoyl-[ACP] = (3Z)-decenoyl-[ACP]</text>
        <dbReference type="Rhea" id="RHEA:23568"/>
        <dbReference type="Rhea" id="RHEA-COMP:9639"/>
        <dbReference type="Rhea" id="RHEA-COMP:9927"/>
        <dbReference type="ChEBI" id="CHEBI:78467"/>
        <dbReference type="ChEBI" id="CHEBI:78798"/>
        <dbReference type="EC" id="5.3.3.14"/>
    </reaction>
</comment>
<comment type="pathway">
    <text evidence="1">Lipid metabolism; fatty acid biosynthesis.</text>
</comment>
<comment type="subunit">
    <text evidence="1">Homodimer.</text>
</comment>
<comment type="subcellular location">
    <subcellularLocation>
        <location evidence="1">Cytoplasm</location>
    </subcellularLocation>
</comment>
<comment type="similarity">
    <text evidence="1">Belongs to the thioester dehydratase family. FabA subfamily.</text>
</comment>
<protein>
    <recommendedName>
        <fullName evidence="1">3-hydroxydecanoyl-[acyl-carrier-protein] dehydratase</fullName>
        <ecNumber evidence="1">4.2.1.59</ecNumber>
    </recommendedName>
    <alternativeName>
        <fullName evidence="1">3-hydroxyacyl-[acyl-carrier-protein] dehydratase FabA</fullName>
    </alternativeName>
    <alternativeName>
        <fullName evidence="1">Beta-hydroxydecanoyl thioester dehydrase</fullName>
    </alternativeName>
    <alternativeName>
        <fullName evidence="1">Trans-2-decenoyl-[acyl-carrier-protein] isomerase</fullName>
        <ecNumber evidence="1">5.3.3.14</ecNumber>
    </alternativeName>
</protein>
<accession>Q32HV2</accession>
<keyword id="KW-0963">Cytoplasm</keyword>
<keyword id="KW-0275">Fatty acid biosynthesis</keyword>
<keyword id="KW-0276">Fatty acid metabolism</keyword>
<keyword id="KW-0413">Isomerase</keyword>
<keyword id="KW-0444">Lipid biosynthesis</keyword>
<keyword id="KW-0443">Lipid metabolism</keyword>
<keyword id="KW-0456">Lyase</keyword>
<keyword id="KW-1185">Reference proteome</keyword>
<dbReference type="EC" id="4.2.1.59" evidence="1"/>
<dbReference type="EC" id="5.3.3.14" evidence="1"/>
<dbReference type="EMBL" id="CP000034">
    <property type="protein sequence ID" value="ABB61103.1"/>
    <property type="molecule type" value="Genomic_DNA"/>
</dbReference>
<dbReference type="RefSeq" id="WP_000227927.1">
    <property type="nucleotide sequence ID" value="NC_007606.1"/>
</dbReference>
<dbReference type="RefSeq" id="YP_402594.1">
    <property type="nucleotide sequence ID" value="NC_007606.1"/>
</dbReference>
<dbReference type="SMR" id="Q32HV2"/>
<dbReference type="STRING" id="300267.SDY_0927"/>
<dbReference type="EnsemblBacteria" id="ABB61103">
    <property type="protein sequence ID" value="ABB61103"/>
    <property type="gene ID" value="SDY_0927"/>
</dbReference>
<dbReference type="GeneID" id="93776460"/>
<dbReference type="KEGG" id="sdy:SDY_0927"/>
<dbReference type="PATRIC" id="fig|300267.13.peg.1073"/>
<dbReference type="HOGENOM" id="CLU_097925_0_0_6"/>
<dbReference type="UniPathway" id="UPA00094"/>
<dbReference type="Proteomes" id="UP000002716">
    <property type="component" value="Chromosome"/>
</dbReference>
<dbReference type="GO" id="GO:0005737">
    <property type="term" value="C:cytoplasm"/>
    <property type="evidence" value="ECO:0007669"/>
    <property type="project" value="UniProtKB-SubCell"/>
</dbReference>
<dbReference type="GO" id="GO:0019171">
    <property type="term" value="F:(3R)-hydroxyacyl-[acyl-carrier-protein] dehydratase activity"/>
    <property type="evidence" value="ECO:0007669"/>
    <property type="project" value="UniProtKB-UniRule"/>
</dbReference>
<dbReference type="GO" id="GO:0034017">
    <property type="term" value="F:trans-2-decenoyl-acyl-carrier-protein isomerase activity"/>
    <property type="evidence" value="ECO:0007669"/>
    <property type="project" value="UniProtKB-UniRule"/>
</dbReference>
<dbReference type="GO" id="GO:0006636">
    <property type="term" value="P:unsaturated fatty acid biosynthetic process"/>
    <property type="evidence" value="ECO:0007669"/>
    <property type="project" value="UniProtKB-UniRule"/>
</dbReference>
<dbReference type="CDD" id="cd01287">
    <property type="entry name" value="FabA"/>
    <property type="match status" value="1"/>
</dbReference>
<dbReference type="FunFam" id="3.10.129.10:FF:000003">
    <property type="entry name" value="3-hydroxydecanoyl-[acyl-carrier-protein] dehydratase"/>
    <property type="match status" value="1"/>
</dbReference>
<dbReference type="Gene3D" id="3.10.129.10">
    <property type="entry name" value="Hotdog Thioesterase"/>
    <property type="match status" value="1"/>
</dbReference>
<dbReference type="HAMAP" id="MF_00405">
    <property type="entry name" value="FabA"/>
    <property type="match status" value="1"/>
</dbReference>
<dbReference type="InterPro" id="IPR010083">
    <property type="entry name" value="FabA"/>
</dbReference>
<dbReference type="InterPro" id="IPR013114">
    <property type="entry name" value="FabA_FabZ"/>
</dbReference>
<dbReference type="InterPro" id="IPR029069">
    <property type="entry name" value="HotDog_dom_sf"/>
</dbReference>
<dbReference type="NCBIfam" id="TIGR01749">
    <property type="entry name" value="fabA"/>
    <property type="match status" value="1"/>
</dbReference>
<dbReference type="NCBIfam" id="NF003509">
    <property type="entry name" value="PRK05174.1"/>
    <property type="match status" value="1"/>
</dbReference>
<dbReference type="PANTHER" id="PTHR30272">
    <property type="entry name" value="3-HYDROXYACYL-[ACYL-CARRIER-PROTEIN] DEHYDRATASE"/>
    <property type="match status" value="1"/>
</dbReference>
<dbReference type="PANTHER" id="PTHR30272:SF8">
    <property type="entry name" value="3-HYDROXYDECANOYL-[ACYL-CARRIER-PROTEIN] DEHYDRATASE"/>
    <property type="match status" value="1"/>
</dbReference>
<dbReference type="Pfam" id="PF07977">
    <property type="entry name" value="FabA"/>
    <property type="match status" value="1"/>
</dbReference>
<dbReference type="SUPFAM" id="SSF54637">
    <property type="entry name" value="Thioesterase/thiol ester dehydrase-isomerase"/>
    <property type="match status" value="1"/>
</dbReference>